<organism>
    <name type="scientific">Rattus norvegicus</name>
    <name type="common">Rat</name>
    <dbReference type="NCBI Taxonomy" id="10116"/>
    <lineage>
        <taxon>Eukaryota</taxon>
        <taxon>Metazoa</taxon>
        <taxon>Chordata</taxon>
        <taxon>Craniata</taxon>
        <taxon>Vertebrata</taxon>
        <taxon>Euteleostomi</taxon>
        <taxon>Mammalia</taxon>
        <taxon>Eutheria</taxon>
        <taxon>Euarchontoglires</taxon>
        <taxon>Glires</taxon>
        <taxon>Rodentia</taxon>
        <taxon>Myomorpha</taxon>
        <taxon>Muroidea</taxon>
        <taxon>Muridae</taxon>
        <taxon>Murinae</taxon>
        <taxon>Rattus</taxon>
    </lineage>
</organism>
<comment type="function">
    <text evidence="1">Catalyzes the hydrolytic deamination of enamine/imine intermediates that form during the course of normal metabolism. May facilitate the release of ammonia from these potentially toxic reactive metabolites, reducing their impact on cellular components. It may act on enamine/imine intermediates formed by several types of pyridoxal-5'-phosphate-dependent dehydratases including L-threonine dehydratase.</text>
</comment>
<comment type="function">
    <text evidence="1 3">Also promotes endoribonucleolytic cleavage of some transcripts by promoting recruitment of the ribonuclease P/MRP complex (PubMed:10400702). Acts by bridging YTHDF2 and the ribonuclease P/MRP complex (By similarity). RIDA/HRSP12 binds to N6-methyladenosine (m6A)-containing mRNAs containing a 5'-GGUUC-3' motif: cooperative binding of RIDA/HRSP12 and YTHDF2 to such transcripts lead to recruitment of the ribonuclease P/MRP complex and subsequent endoribonucleolytic cleavage (By similarity).</text>
</comment>
<comment type="catalytic activity">
    <reaction evidence="1">
        <text>2-iminobutanoate + H2O = 2-oxobutanoate + NH4(+)</text>
        <dbReference type="Rhea" id="RHEA:39975"/>
        <dbReference type="ChEBI" id="CHEBI:15377"/>
        <dbReference type="ChEBI" id="CHEBI:16763"/>
        <dbReference type="ChEBI" id="CHEBI:28938"/>
        <dbReference type="ChEBI" id="CHEBI:76545"/>
        <dbReference type="EC" id="3.5.99.10"/>
    </reaction>
</comment>
<comment type="catalytic activity">
    <reaction evidence="1">
        <text>2-iminopropanoate + H2O = pyruvate + NH4(+)</text>
        <dbReference type="Rhea" id="RHEA:40671"/>
        <dbReference type="ChEBI" id="CHEBI:15361"/>
        <dbReference type="ChEBI" id="CHEBI:15377"/>
        <dbReference type="ChEBI" id="CHEBI:28938"/>
        <dbReference type="ChEBI" id="CHEBI:44400"/>
        <dbReference type="EC" id="3.5.99.10"/>
    </reaction>
</comment>
<comment type="subunit">
    <text evidence="1">Homotrimer. Interacts with YTHDF2.</text>
</comment>
<comment type="subcellular location">
    <subcellularLocation>
        <location evidence="1">Cytoplasm</location>
    </subcellularLocation>
    <subcellularLocation>
        <location evidence="1">Nucleus</location>
    </subcellularLocation>
    <subcellularLocation>
        <location evidence="4">Peroxisome</location>
    </subcellularLocation>
    <subcellularLocation>
        <location evidence="5">Mitochondrion</location>
    </subcellularLocation>
    <text evidence="1">Mostly cytoplasmic but, in less differentiated cells occasionally nuclear.</text>
</comment>
<comment type="tissue specificity">
    <text evidence="6">Liver and kidney.</text>
</comment>
<comment type="similarity">
    <text evidence="11">Belongs to the RutC family.</text>
</comment>
<comment type="sequence caution" evidence="11">
    <conflict type="frameshift">
        <sequence resource="EMBL-CDS" id="CAB36976"/>
    </conflict>
</comment>
<dbReference type="EC" id="3.5.99.10" evidence="1"/>
<dbReference type="EMBL" id="D49363">
    <property type="protein sequence ID" value="BAA08359.1"/>
    <property type="molecule type" value="mRNA"/>
</dbReference>
<dbReference type="EMBL" id="X70825">
    <property type="protein sequence ID" value="CAB36976.1"/>
    <property type="status" value="ALT_FRAME"/>
    <property type="molecule type" value="mRNA"/>
</dbReference>
<dbReference type="EMBL" id="AF015949">
    <property type="protein sequence ID" value="AAB70815.1"/>
    <property type="molecule type" value="mRNA"/>
</dbReference>
<dbReference type="EMBL" id="BC078779">
    <property type="protein sequence ID" value="AAH78779.1"/>
    <property type="molecule type" value="mRNA"/>
</dbReference>
<dbReference type="PIR" id="S30349">
    <property type="entry name" value="S30349"/>
</dbReference>
<dbReference type="RefSeq" id="NP_113902.2">
    <property type="nucleotide sequence ID" value="NM_031714.2"/>
</dbReference>
<dbReference type="PDB" id="1QAH">
    <property type="method" value="X-ray"/>
    <property type="resolution" value="1.80 A"/>
    <property type="chains" value="A/B=2-137"/>
</dbReference>
<dbReference type="PDBsum" id="1QAH"/>
<dbReference type="SMR" id="P52759"/>
<dbReference type="FunCoup" id="P52759">
    <property type="interactions" value="1711"/>
</dbReference>
<dbReference type="STRING" id="10116.ENSRNOP00000007430"/>
<dbReference type="iPTMnet" id="P52759"/>
<dbReference type="PhosphoSitePlus" id="P52759"/>
<dbReference type="PaxDb" id="10116-ENSRNOP00000007430"/>
<dbReference type="GeneID" id="65151"/>
<dbReference type="KEGG" id="rno:65151"/>
<dbReference type="UCSC" id="RGD:70940">
    <property type="organism name" value="rat"/>
</dbReference>
<dbReference type="AGR" id="RGD:70940"/>
<dbReference type="CTD" id="10247"/>
<dbReference type="RGD" id="70940">
    <property type="gene designation" value="Rida"/>
</dbReference>
<dbReference type="VEuPathDB" id="HostDB:ENSRNOG00000005437"/>
<dbReference type="eggNOG" id="KOG2317">
    <property type="taxonomic scope" value="Eukaryota"/>
</dbReference>
<dbReference type="HOGENOM" id="CLU_100715_7_1_1"/>
<dbReference type="InParanoid" id="P52759"/>
<dbReference type="PhylomeDB" id="P52759"/>
<dbReference type="Reactome" id="R-RNO-8849175">
    <property type="pathway name" value="Threonine catabolism"/>
</dbReference>
<dbReference type="EvolutionaryTrace" id="P52759"/>
<dbReference type="PRO" id="PR:P52759"/>
<dbReference type="Proteomes" id="UP000002494">
    <property type="component" value="Chromosome 7"/>
</dbReference>
<dbReference type="Bgee" id="ENSRNOG00000005437">
    <property type="expression patterns" value="Expressed in kidney and 20 other cell types or tissues"/>
</dbReference>
<dbReference type="GO" id="GO:0005737">
    <property type="term" value="C:cytoplasm"/>
    <property type="evidence" value="ECO:0000266"/>
    <property type="project" value="RGD"/>
</dbReference>
<dbReference type="GO" id="GO:0005829">
    <property type="term" value="C:cytosol"/>
    <property type="evidence" value="ECO:0000314"/>
    <property type="project" value="RGD"/>
</dbReference>
<dbReference type="GO" id="GO:0005759">
    <property type="term" value="C:mitochondrial matrix"/>
    <property type="evidence" value="ECO:0000314"/>
    <property type="project" value="UniProtKB"/>
</dbReference>
<dbReference type="GO" id="GO:0005739">
    <property type="term" value="C:mitochondrion"/>
    <property type="evidence" value="ECO:0000318"/>
    <property type="project" value="GO_Central"/>
</dbReference>
<dbReference type="GO" id="GO:0005634">
    <property type="term" value="C:nucleus"/>
    <property type="evidence" value="ECO:0000266"/>
    <property type="project" value="RGD"/>
</dbReference>
<dbReference type="GO" id="GO:0005777">
    <property type="term" value="C:peroxisome"/>
    <property type="evidence" value="ECO:0000314"/>
    <property type="project" value="RGD"/>
</dbReference>
<dbReference type="GO" id="GO:0120242">
    <property type="term" value="F:2-iminobutanoate deaminase activity"/>
    <property type="evidence" value="ECO:0007669"/>
    <property type="project" value="RHEA"/>
</dbReference>
<dbReference type="GO" id="GO:0120243">
    <property type="term" value="F:2-iminopropanoate deaminase activity"/>
    <property type="evidence" value="ECO:0007669"/>
    <property type="project" value="RHEA"/>
</dbReference>
<dbReference type="GO" id="GO:0043169">
    <property type="term" value="F:cation binding"/>
    <property type="evidence" value="ECO:0000314"/>
    <property type="project" value="RGD"/>
</dbReference>
<dbReference type="GO" id="GO:0019239">
    <property type="term" value="F:deaminase activity"/>
    <property type="evidence" value="ECO:0000318"/>
    <property type="project" value="GO_Central"/>
</dbReference>
<dbReference type="GO" id="GO:0042802">
    <property type="term" value="F:identical protein binding"/>
    <property type="evidence" value="ECO:0000353"/>
    <property type="project" value="RGD"/>
</dbReference>
<dbReference type="GO" id="GO:0036041">
    <property type="term" value="F:long-chain fatty acid binding"/>
    <property type="evidence" value="ECO:0000314"/>
    <property type="project" value="RGD"/>
</dbReference>
<dbReference type="GO" id="GO:0003729">
    <property type="term" value="F:mRNA binding"/>
    <property type="evidence" value="ECO:0000250"/>
    <property type="project" value="UniProtKB"/>
</dbReference>
<dbReference type="GO" id="GO:0016892">
    <property type="term" value="F:RNA endonuclease activity, producing 3'-phosphomonoesters"/>
    <property type="evidence" value="ECO:0000314"/>
    <property type="project" value="RGD"/>
</dbReference>
<dbReference type="GO" id="GO:0046914">
    <property type="term" value="F:transition metal ion binding"/>
    <property type="evidence" value="ECO:0000314"/>
    <property type="project" value="RGD"/>
</dbReference>
<dbReference type="GO" id="GO:0070314">
    <property type="term" value="P:G1 to G0 transition"/>
    <property type="evidence" value="ECO:0000270"/>
    <property type="project" value="RGD"/>
</dbReference>
<dbReference type="GO" id="GO:0001822">
    <property type="term" value="P:kidney development"/>
    <property type="evidence" value="ECO:0000270"/>
    <property type="project" value="RGD"/>
</dbReference>
<dbReference type="GO" id="GO:0006629">
    <property type="term" value="P:lipid metabolic process"/>
    <property type="evidence" value="ECO:0007669"/>
    <property type="project" value="UniProtKB-KW"/>
</dbReference>
<dbReference type="GO" id="GO:0030324">
    <property type="term" value="P:lung development"/>
    <property type="evidence" value="ECO:0000270"/>
    <property type="project" value="RGD"/>
</dbReference>
<dbReference type="GO" id="GO:0006402">
    <property type="term" value="P:mRNA catabolic process"/>
    <property type="evidence" value="ECO:0000250"/>
    <property type="project" value="UniProtKB"/>
</dbReference>
<dbReference type="GO" id="GO:0061157">
    <property type="term" value="P:mRNA destabilization"/>
    <property type="evidence" value="ECO:0000250"/>
    <property type="project" value="UniProtKB"/>
</dbReference>
<dbReference type="GO" id="GO:0050680">
    <property type="term" value="P:negative regulation of epithelial cell proliferation"/>
    <property type="evidence" value="ECO:0000315"/>
    <property type="project" value="RGD"/>
</dbReference>
<dbReference type="GO" id="GO:0017148">
    <property type="term" value="P:negative regulation of translation"/>
    <property type="evidence" value="ECO:0000314"/>
    <property type="project" value="RGD"/>
</dbReference>
<dbReference type="GO" id="GO:0033993">
    <property type="term" value="P:response to lipid"/>
    <property type="evidence" value="ECO:0000270"/>
    <property type="project" value="RGD"/>
</dbReference>
<dbReference type="GO" id="GO:1902074">
    <property type="term" value="P:response to salt"/>
    <property type="evidence" value="ECO:0000270"/>
    <property type="project" value="RGD"/>
</dbReference>
<dbReference type="CDD" id="cd00448">
    <property type="entry name" value="YjgF_YER057c_UK114_family"/>
    <property type="match status" value="1"/>
</dbReference>
<dbReference type="FunFam" id="3.30.1330.40:FF:000008">
    <property type="entry name" value="ribonuclease UK114 isoform X2"/>
    <property type="match status" value="1"/>
</dbReference>
<dbReference type="Gene3D" id="3.30.1330.40">
    <property type="entry name" value="RutC-like"/>
    <property type="match status" value="1"/>
</dbReference>
<dbReference type="InterPro" id="IPR006056">
    <property type="entry name" value="RidA"/>
</dbReference>
<dbReference type="InterPro" id="IPR019897">
    <property type="entry name" value="RidA_CS"/>
</dbReference>
<dbReference type="InterPro" id="IPR035959">
    <property type="entry name" value="RutC-like_sf"/>
</dbReference>
<dbReference type="InterPro" id="IPR006175">
    <property type="entry name" value="YjgF/YER057c/UK114"/>
</dbReference>
<dbReference type="NCBIfam" id="TIGR00004">
    <property type="entry name" value="Rid family detoxifying hydrolase"/>
    <property type="match status" value="1"/>
</dbReference>
<dbReference type="PANTHER" id="PTHR11803">
    <property type="entry name" value="2-IMINOBUTANOATE/2-IMINOPROPANOATE DEAMINASE RIDA"/>
    <property type="match status" value="1"/>
</dbReference>
<dbReference type="PANTHER" id="PTHR11803:SF53">
    <property type="entry name" value="2-IMINOBUTANOATE_2-IMINOPROPANOATE DEAMINASE"/>
    <property type="match status" value="1"/>
</dbReference>
<dbReference type="Pfam" id="PF01042">
    <property type="entry name" value="Ribonuc_L-PSP"/>
    <property type="match status" value="1"/>
</dbReference>
<dbReference type="SUPFAM" id="SSF55298">
    <property type="entry name" value="YjgF-like"/>
    <property type="match status" value="1"/>
</dbReference>
<dbReference type="PROSITE" id="PS01094">
    <property type="entry name" value="UPF0076"/>
    <property type="match status" value="1"/>
</dbReference>
<protein>
    <recommendedName>
        <fullName evidence="1">2-iminobutanoate/2-iminopropanoate deaminase</fullName>
        <ecNumber evidence="1">3.5.99.10</ecNumber>
    </recommendedName>
    <alternativeName>
        <fullName evidence="8 10">Liver perchloric acid-soluble protein</fullName>
        <shortName evidence="8">L-PSP</shortName>
    </alternativeName>
    <alternativeName>
        <fullName evidence="14">Reactive intermediate imine deaminase A homolog</fullName>
    </alternativeName>
    <alternativeName>
        <fullName evidence="8">Translation inhibitor L-PSP ribonuclease</fullName>
    </alternativeName>
    <alternativeName>
        <fullName evidence="12">UK114 antigen homolog</fullName>
    </alternativeName>
    <alternativeName>
        <fullName evidence="9">rp14.5</fullName>
    </alternativeName>
</protein>
<accession>P52759</accession>
<accession>O35262</accession>
<accession>Q9WUV8</accession>
<proteinExistence type="evidence at protein level"/>
<reference key="1">
    <citation type="journal article" date="1995" name="J. Biol. Chem.">
        <title>Isolation and characterization of a novel perchloric acid-soluble protein inhibiting cell-free protein synthesis.</title>
        <authorList>
            <person name="Oka T."/>
            <person name="Tsuji H."/>
            <person name="Noda C."/>
            <person name="Sakai K."/>
            <person name="Hong Y.-M."/>
            <person name="Suzuki I."/>
            <person name="Munoz S."/>
            <person name="Natori Y."/>
        </authorList>
    </citation>
    <scope>NUCLEOTIDE SEQUENCE [MRNA]</scope>
    <scope>PARTIAL PROTEIN SEQUENCE</scope>
    <scope>ACETYLATION AT SER-2</scope>
    <source>
        <tissue>Liver</tissue>
    </source>
</reference>
<reference key="2">
    <citation type="journal article" date="1993" name="Eur. J. Biochem.">
        <title>Characterization, purification and cDNA cloning of a rat perchloric-acid-soluble 23-kDa protein present only in liver and kidney.</title>
        <authorList>
            <person name="Levy-Favatier F."/>
            <person name="Cuisset L."/>
            <person name="Nedelec B."/>
            <person name="Tichonicky L."/>
            <person name="Kruh J."/>
            <person name="Delpech M."/>
        </authorList>
    </citation>
    <scope>NUCLEOTIDE SEQUENCE [MRNA]</scope>
    <scope>TISSUE SPECIFICITY</scope>
    <source>
        <tissue>Kidney</tissue>
        <tissue>Liver</tissue>
    </source>
</reference>
<reference key="3">
    <citation type="submission" date="1997-07" db="EMBL/GenBank/DDBJ databases">
        <authorList>
            <person name="Lighthall G."/>
            <person name="Hamlyn J.M."/>
        </authorList>
    </citation>
    <scope>NUCLEOTIDE SEQUENCE [MRNA]</scope>
    <source>
        <strain>Dahl salt-sensitive</strain>
    </source>
</reference>
<reference key="4">
    <citation type="journal article" date="2004" name="Genome Res.">
        <title>The status, quality, and expansion of the NIH full-length cDNA project: the Mammalian Gene Collection (MGC).</title>
        <authorList>
            <consortium name="The MGC Project Team"/>
        </authorList>
    </citation>
    <scope>NUCLEOTIDE SEQUENCE [LARGE SCALE MRNA]</scope>
    <source>
        <tissue>Kidney</tissue>
    </source>
</reference>
<reference key="5">
    <citation type="submission" date="2006-11" db="UniProtKB">
        <authorList>
            <person name="Lubec G."/>
            <person name="Afjehi-Sadat L."/>
        </authorList>
    </citation>
    <scope>PROTEIN SEQUENCE OF 14-29 AND 79-97</scope>
    <scope>IDENTIFICATION BY MASS SPECTROMETRY</scope>
    <source>
        <strain>Sprague-Dawley</strain>
        <tissue>Spinal cord</tissue>
    </source>
</reference>
<reference key="6">
    <citation type="journal article" date="2000" name="Mol. Cell. Biol.">
        <title>Mmf1p, a novel yeast mitochondrial protein conserved throughout evolution and involved in maintenance of the mitochondrial genome.</title>
        <authorList>
            <person name="Oxelmark E."/>
            <person name="Marchini A."/>
            <person name="Malanchi I."/>
            <person name="Magherini F."/>
            <person name="Jaquet L."/>
            <person name="Hajibagheri M.A."/>
            <person name="Blight K.J."/>
            <person name="Jauniaux J.-C."/>
            <person name="Tommasino M."/>
        </authorList>
    </citation>
    <scope>SUBCELLULAR LOCATION</scope>
</reference>
<reference key="7">
    <citation type="journal article" date="1999" name="J. Biol. Chem.">
        <title>Ribonuclease activity of rat liver perchloric acid-soluble protein, a potent inhibitor of protein synthesis.</title>
        <authorList>
            <person name="Morishita R."/>
            <person name="Kawagoshi A."/>
            <person name="Sawasaki T."/>
            <person name="Madin K."/>
            <person name="Ogasawara T."/>
            <person name="Oka T."/>
            <person name="Endo Y."/>
        </authorList>
    </citation>
    <scope>FUNCTION</scope>
    <scope>CATALYTIC ACTIVITY</scope>
</reference>
<reference key="8">
    <citation type="journal article" date="2007" name="Biochem. Biophys. Res. Commun.">
        <title>UK114, a YjgF/Yer057p/UK114 family protein highly conserved from bacteria to mammals, is localized in rat liver peroxisomes.</title>
        <authorList>
            <person name="Antonenkov V.D."/>
            <person name="Ohlmeier S."/>
            <person name="Sormunen R.T."/>
            <person name="Hiltunen J.K."/>
        </authorList>
    </citation>
    <scope>SUBCELLULAR LOCATION</scope>
    <source>
        <tissue>Liver</tissue>
    </source>
</reference>
<reference key="9">
    <citation type="submission" date="1999-03" db="PDB data bank">
        <title>Crystal structure of perchloric acid soluble protein-a translational inhibitor.</title>
        <authorList>
            <person name="Djinovic Carugo K."/>
            <person name="Oka T."/>
        </authorList>
    </citation>
    <scope>X-RAY CRYSTALLOGRAPHY (1.80 ANGSTROMS) OF 2-137</scope>
</reference>
<keyword id="KW-0002">3D-structure</keyword>
<keyword id="KW-0007">Acetylation</keyword>
<keyword id="KW-0963">Cytoplasm</keyword>
<keyword id="KW-0903">Direct protein sequencing</keyword>
<keyword id="KW-0378">Hydrolase</keyword>
<keyword id="KW-0443">Lipid metabolism</keyword>
<keyword id="KW-0496">Mitochondrion</keyword>
<keyword id="KW-0539">Nucleus</keyword>
<keyword id="KW-0576">Peroxisome</keyword>
<keyword id="KW-0597">Phosphoprotein</keyword>
<keyword id="KW-1185">Reference proteome</keyword>
<keyword id="KW-0694">RNA-binding</keyword>
<name>RIDA_RAT</name>
<evidence type="ECO:0000250" key="1">
    <source>
        <dbReference type="UniProtKB" id="P52758"/>
    </source>
</evidence>
<evidence type="ECO:0000250" key="2">
    <source>
        <dbReference type="UniProtKB" id="P52760"/>
    </source>
</evidence>
<evidence type="ECO:0000269" key="3">
    <source>
    </source>
</evidence>
<evidence type="ECO:0000269" key="4">
    <source>
    </source>
</evidence>
<evidence type="ECO:0000269" key="5">
    <source>
    </source>
</evidence>
<evidence type="ECO:0000269" key="6">
    <source>
    </source>
</evidence>
<evidence type="ECO:0000269" key="7">
    <source>
    </source>
</evidence>
<evidence type="ECO:0000303" key="8">
    <source>
    </source>
</evidence>
<evidence type="ECO:0000303" key="9">
    <source>
    </source>
</evidence>
<evidence type="ECO:0000303" key="10">
    <source>
    </source>
</evidence>
<evidence type="ECO:0000305" key="11"/>
<evidence type="ECO:0000305" key="12">
    <source>
    </source>
</evidence>
<evidence type="ECO:0000312" key="13">
    <source>
        <dbReference type="EMBL" id="BAA08359.1"/>
    </source>
</evidence>
<evidence type="ECO:0000312" key="14">
    <source>
        <dbReference type="RGD" id="70940"/>
    </source>
</evidence>
<evidence type="ECO:0007829" key="15">
    <source>
        <dbReference type="PDB" id="1QAH"/>
    </source>
</evidence>
<gene>
    <name evidence="14" type="primary">Rida</name>
    <name evidence="13" type="synonym">Psp1</name>
</gene>
<feature type="initiator methionine" description="Removed" evidence="7">
    <location>
        <position position="1"/>
    </location>
</feature>
<feature type="chain" id="PRO_0000170310" description="2-iminobutanoate/2-iminopropanoate deaminase">
    <location>
        <begin position="2"/>
        <end position="137"/>
    </location>
</feature>
<feature type="modified residue" description="N-acetylserine" evidence="7">
    <location>
        <position position="2"/>
    </location>
</feature>
<feature type="modified residue" description="N6-succinyllysine" evidence="2">
    <location>
        <position position="13"/>
    </location>
</feature>
<feature type="modified residue" description="N6-succinyllysine" evidence="2">
    <location>
        <position position="60"/>
    </location>
</feature>
<feature type="modified residue" description="N6-succinyllysine" evidence="2">
    <location>
        <position position="67"/>
    </location>
</feature>
<feature type="modified residue" description="Phosphothreonine" evidence="1">
    <location>
        <position position="74"/>
    </location>
</feature>
<feature type="sequence conflict" description="In Ref. 3; AAB70815." evidence="11" ref="3">
    <original>K</original>
    <variation>N</variation>
    <location>
        <position position="56"/>
    </location>
</feature>
<feature type="sequence conflict" description="In Ref. 2; CAB36976." evidence="11" ref="2">
    <original>L</original>
    <variation>V</variation>
    <location>
        <position position="137"/>
    </location>
</feature>
<feature type="strand" evidence="15">
    <location>
        <begin position="6"/>
        <end position="9"/>
    </location>
</feature>
<feature type="strand" evidence="15">
    <location>
        <begin position="18"/>
        <end position="20"/>
    </location>
</feature>
<feature type="strand" evidence="15">
    <location>
        <begin position="23"/>
        <end position="27"/>
    </location>
</feature>
<feature type="strand" evidence="15">
    <location>
        <begin position="30"/>
        <end position="36"/>
    </location>
</feature>
<feature type="turn" evidence="15">
    <location>
        <begin position="41"/>
        <end position="43"/>
    </location>
</feature>
<feature type="helix" evidence="15">
    <location>
        <begin position="51"/>
        <end position="68"/>
    </location>
</feature>
<feature type="helix" evidence="15">
    <location>
        <begin position="73"/>
        <end position="75"/>
    </location>
</feature>
<feature type="strand" evidence="15">
    <location>
        <begin position="76"/>
        <end position="84"/>
    </location>
</feature>
<feature type="helix" evidence="15">
    <location>
        <begin position="86"/>
        <end position="88"/>
    </location>
</feature>
<feature type="helix" evidence="15">
    <location>
        <begin position="89"/>
        <end position="97"/>
    </location>
</feature>
<feature type="strand" evidence="15">
    <location>
        <begin position="106"/>
        <end position="111"/>
    </location>
</feature>
<feature type="helix" evidence="15">
    <location>
        <begin position="116"/>
        <end position="118"/>
    </location>
</feature>
<feature type="strand" evidence="15">
    <location>
        <begin position="120"/>
        <end position="128"/>
    </location>
</feature>
<sequence length="137" mass="14303">MSSIIRKVISTSKAPAAIGAYSQAVLVDRTIYVSGQIGMDPSSGQLVPGGVAEEAKQALKNLGEILKAAGCDFTNVVKTTVLLADINDFGTVNEIYKTYFQGNLPARAAYQVAALPKGSRIEIEAIAVQGPFTTAGL</sequence>